<protein>
    <recommendedName>
        <fullName evidence="1">Cytochrome c biogenesis protein CcsA</fullName>
    </recommendedName>
</protein>
<gene>
    <name evidence="1" type="primary">ccsA</name>
</gene>
<dbReference type="EMBL" id="AP009371">
    <property type="protein sequence ID" value="BAF50249.1"/>
    <property type="molecule type" value="Genomic_DNA"/>
</dbReference>
<dbReference type="RefSeq" id="YP_001123424.1">
    <property type="nucleotide sequence ID" value="NC_009270.1"/>
</dbReference>
<dbReference type="SMR" id="A4QKP4"/>
<dbReference type="GeneID" id="4961629"/>
<dbReference type="GO" id="GO:0009535">
    <property type="term" value="C:chloroplast thylakoid membrane"/>
    <property type="evidence" value="ECO:0007669"/>
    <property type="project" value="UniProtKB-SubCell"/>
</dbReference>
<dbReference type="GO" id="GO:0005886">
    <property type="term" value="C:plasma membrane"/>
    <property type="evidence" value="ECO:0007669"/>
    <property type="project" value="TreeGrafter"/>
</dbReference>
<dbReference type="GO" id="GO:0020037">
    <property type="term" value="F:heme binding"/>
    <property type="evidence" value="ECO:0007669"/>
    <property type="project" value="InterPro"/>
</dbReference>
<dbReference type="GO" id="GO:0017004">
    <property type="term" value="P:cytochrome complex assembly"/>
    <property type="evidence" value="ECO:0007669"/>
    <property type="project" value="UniProtKB-UniRule"/>
</dbReference>
<dbReference type="HAMAP" id="MF_01391">
    <property type="entry name" value="CytC_CcsA"/>
    <property type="match status" value="1"/>
</dbReference>
<dbReference type="InterPro" id="IPR002541">
    <property type="entry name" value="Cyt_c_assembly"/>
</dbReference>
<dbReference type="InterPro" id="IPR017562">
    <property type="entry name" value="Cyt_c_biogenesis_CcsA"/>
</dbReference>
<dbReference type="InterPro" id="IPR045062">
    <property type="entry name" value="Cyt_c_biogenesis_CcsA/CcmC"/>
</dbReference>
<dbReference type="NCBIfam" id="TIGR03144">
    <property type="entry name" value="cytochr_II_ccsB"/>
    <property type="match status" value="1"/>
</dbReference>
<dbReference type="PANTHER" id="PTHR30071:SF1">
    <property type="entry name" value="CYTOCHROME B_B6 PROTEIN-RELATED"/>
    <property type="match status" value="1"/>
</dbReference>
<dbReference type="PANTHER" id="PTHR30071">
    <property type="entry name" value="HEME EXPORTER PROTEIN C"/>
    <property type="match status" value="1"/>
</dbReference>
<dbReference type="Pfam" id="PF01578">
    <property type="entry name" value="Cytochrom_C_asm"/>
    <property type="match status" value="1"/>
</dbReference>
<feature type="chain" id="PRO_0000353737" description="Cytochrome c biogenesis protein CcsA">
    <location>
        <begin position="1"/>
        <end position="328"/>
    </location>
</feature>
<feature type="transmembrane region" description="Helical" evidence="1">
    <location>
        <begin position="13"/>
        <end position="33"/>
    </location>
</feature>
<feature type="transmembrane region" description="Helical" evidence="1">
    <location>
        <begin position="46"/>
        <end position="66"/>
    </location>
</feature>
<feature type="transmembrane region" description="Helical" evidence="1">
    <location>
        <begin position="73"/>
        <end position="93"/>
    </location>
</feature>
<feature type="transmembrane region" description="Helical" evidence="1">
    <location>
        <begin position="101"/>
        <end position="121"/>
    </location>
</feature>
<feature type="transmembrane region" description="Helical" evidence="1">
    <location>
        <begin position="146"/>
        <end position="166"/>
    </location>
</feature>
<feature type="transmembrane region" description="Helical" evidence="1">
    <location>
        <begin position="234"/>
        <end position="254"/>
    </location>
</feature>
<feature type="transmembrane region" description="Helical" evidence="1">
    <location>
        <begin position="263"/>
        <end position="283"/>
    </location>
</feature>
<feature type="transmembrane region" description="Helical" evidence="1">
    <location>
        <begin position="295"/>
        <end position="315"/>
    </location>
</feature>
<proteinExistence type="inferred from homology"/>
<organism>
    <name type="scientific">Capsella bursa-pastoris</name>
    <name type="common">Shepherd's purse</name>
    <name type="synonym">Thlaspi bursa-pastoris</name>
    <dbReference type="NCBI Taxonomy" id="3719"/>
    <lineage>
        <taxon>Eukaryota</taxon>
        <taxon>Viridiplantae</taxon>
        <taxon>Streptophyta</taxon>
        <taxon>Embryophyta</taxon>
        <taxon>Tracheophyta</taxon>
        <taxon>Spermatophyta</taxon>
        <taxon>Magnoliopsida</taxon>
        <taxon>eudicotyledons</taxon>
        <taxon>Gunneridae</taxon>
        <taxon>Pentapetalae</taxon>
        <taxon>rosids</taxon>
        <taxon>malvids</taxon>
        <taxon>Brassicales</taxon>
        <taxon>Brassicaceae</taxon>
        <taxon>Camelineae</taxon>
        <taxon>Capsella</taxon>
    </lineage>
</organism>
<accession>A4QKP4</accession>
<comment type="function">
    <text evidence="1">Required during biogenesis of c-type cytochromes (cytochrome c6 and cytochrome f) at the step of heme attachment.</text>
</comment>
<comment type="subunit">
    <text evidence="1">May interact with Ccs1.</text>
</comment>
<comment type="subcellular location">
    <subcellularLocation>
        <location evidence="1">Plastid</location>
        <location evidence="1">Chloroplast thylakoid membrane</location>
        <topology evidence="1">Multi-pass membrane protein</topology>
    </subcellularLocation>
</comment>
<comment type="similarity">
    <text evidence="1">Belongs to the CcmF/CycK/Ccl1/NrfE/CcsA family.</text>
</comment>
<keyword id="KW-0150">Chloroplast</keyword>
<keyword id="KW-0201">Cytochrome c-type biogenesis</keyword>
<keyword id="KW-0472">Membrane</keyword>
<keyword id="KW-0934">Plastid</keyword>
<keyword id="KW-0793">Thylakoid</keyword>
<keyword id="KW-0812">Transmembrane</keyword>
<keyword id="KW-1133">Transmembrane helix</keyword>
<evidence type="ECO:0000255" key="1">
    <source>
        <dbReference type="HAMAP-Rule" id="MF_01391"/>
    </source>
</evidence>
<name>CCSA_CAPBU</name>
<reference key="1">
    <citation type="submission" date="2007-03" db="EMBL/GenBank/DDBJ databases">
        <title>Sequencing analysis of Capsella bursa-pastoris JO22 chloroplast DNA.</title>
        <authorList>
            <person name="Hosouchi T."/>
            <person name="Tsuruoka H."/>
            <person name="Kotani H."/>
        </authorList>
    </citation>
    <scope>NUCLEOTIDE SEQUENCE [LARGE SCALE GENOMIC DNA]</scope>
</reference>
<sequence length="328" mass="37825">MIFSILEHILTHISFSVVSIVLTIYFLTLLVNLDEIIGFFDSSDKGIIITFFCITGLLFTRWIYSGHFPLSNLYESLIFLSWSFSIIHMVSYFNKKQQNHLNAITAPSAIFIQGFATSGLLNKMPQSAILVPALQSQWLMMHVSMMILGYGALLCGSLLSIALLVITFRKVGPTFWKKNIKKKFLLNELFSFDVLYYINERNSILLQQNINFSFSRNYYRYQLIQQLDFWSFRIISLGFIFLTVGILSGAVWANETWGSYWNWDPKETWAFITWTIFAIYLHIKTNRNVRDINSAIVASIGFLLIWICYFGVNLLGIGLHSYGSFTSN</sequence>
<geneLocation type="chloroplast"/>